<reference key="1">
    <citation type="submission" date="2007-05" db="EMBL/GenBank/DDBJ databases">
        <authorList>
            <consortium name="NIH - Zebrafish Gene Collection (ZGC) project"/>
        </authorList>
    </citation>
    <scope>NUCLEOTIDE SEQUENCE [LARGE SCALE MRNA]</scope>
    <source>
        <strain>AB</strain>
    </source>
</reference>
<organism>
    <name type="scientific">Danio rerio</name>
    <name type="common">Zebrafish</name>
    <name type="synonym">Brachydanio rerio</name>
    <dbReference type="NCBI Taxonomy" id="7955"/>
    <lineage>
        <taxon>Eukaryota</taxon>
        <taxon>Metazoa</taxon>
        <taxon>Chordata</taxon>
        <taxon>Craniata</taxon>
        <taxon>Vertebrata</taxon>
        <taxon>Euteleostomi</taxon>
        <taxon>Actinopterygii</taxon>
        <taxon>Neopterygii</taxon>
        <taxon>Teleostei</taxon>
        <taxon>Ostariophysi</taxon>
        <taxon>Cypriniformes</taxon>
        <taxon>Danionidae</taxon>
        <taxon>Danioninae</taxon>
        <taxon>Danio</taxon>
    </lineage>
</organism>
<keyword id="KW-0966">Cell projection</keyword>
<keyword id="KW-0963">Cytoplasm</keyword>
<keyword id="KW-0333">Golgi apparatus</keyword>
<keyword id="KW-0479">Metal-binding</keyword>
<keyword id="KW-1185">Reference proteome</keyword>
<keyword id="KW-0677">Repeat</keyword>
<keyword id="KW-0728">SH3 domain</keyword>
<keyword id="KW-0808">Transferase</keyword>
<keyword id="KW-0832">Ubl conjugation</keyword>
<keyword id="KW-0833">Ubl conjugation pathway</keyword>
<keyword id="KW-0862">Zinc</keyword>
<keyword id="KW-0863">Zinc-finger</keyword>
<feature type="chain" id="PRO_0000334155" description="E3 ubiquitin-protein ligase SH3RF1">
    <location>
        <begin position="1"/>
        <end position="867"/>
    </location>
</feature>
<feature type="domain" description="SH3 1" evidence="5">
    <location>
        <begin position="132"/>
        <end position="191"/>
    </location>
</feature>
<feature type="domain" description="SH3 2" evidence="5">
    <location>
        <begin position="194"/>
        <end position="257"/>
    </location>
</feature>
<feature type="domain" description="SH3 3" evidence="5">
    <location>
        <begin position="436"/>
        <end position="497"/>
    </location>
</feature>
<feature type="domain" description="SH3 4" evidence="5">
    <location>
        <begin position="808"/>
        <end position="867"/>
    </location>
</feature>
<feature type="zinc finger region" description="RING-type" evidence="4">
    <location>
        <begin position="12"/>
        <end position="53"/>
    </location>
</feature>
<feature type="region of interest" description="Disordered" evidence="6">
    <location>
        <begin position="101"/>
        <end position="127"/>
    </location>
</feature>
<feature type="region of interest" description="Disordered" evidence="6">
    <location>
        <begin position="265"/>
        <end position="328"/>
    </location>
</feature>
<feature type="region of interest" description="Disordered" evidence="6">
    <location>
        <begin position="706"/>
        <end position="794"/>
    </location>
</feature>
<feature type="compositionally biased region" description="Polar residues" evidence="6">
    <location>
        <begin position="116"/>
        <end position="125"/>
    </location>
</feature>
<feature type="compositionally biased region" description="Low complexity" evidence="6">
    <location>
        <begin position="275"/>
        <end position="285"/>
    </location>
</feature>
<feature type="compositionally biased region" description="Low complexity" evidence="6">
    <location>
        <begin position="760"/>
        <end position="769"/>
    </location>
</feature>
<feature type="compositionally biased region" description="Polar residues" evidence="6">
    <location>
        <begin position="770"/>
        <end position="784"/>
    </location>
</feature>
<name>SH3R1_DANRE</name>
<sequence length="867" mass="91632">MDESALLDLLECPVCLERLDATAKVLPCQHTFCRRCLLGIVGSRGELRCPECRTLVESGVDELPSNILLVRLLDGIKQRPRRTGSVHGTCANGSAVAGVRAQGAGGSQRDPGPTGGQSQRVQAKSTPVRGVPQLPCAKALYNYDGKEPGDLKFSKGDIIILRRQVDENWYHGEMGGVHGFFPTNFVQVIKPLPQPPPQCKALYDFELKDKEADKDCLPFSKDDILTVIRRVDENWAEGMLGDKIGIFPISYVEFNSAARQLIELDKPSEGGGDSSEGPSSSSSGPQANGSQKAPGEKKNSKKRHSFTSLTMSHKPCLAPPPQRHSMEISGPVLISSSNPTAAARIGELSGGLSSSAPSQVHICTTGLIVTPPPSSPVTTATVFTFPPETSYASIPVDALPPPPPPPPQSQSSVVGAAALNAGQRPSPAAGDQSGRQRPTVYVAMFPYSPRKEDELELRKGEMFLVLERCQDGWFKGTSMHTGKIGVFPGNYMSPVSRTVSGSSQPKVPLTLCSQAGRGVTIVSPSSALGSMDLSKPLPVCPNATPSCSLPAAVVTAAHLPTGQHPKVLMHVTSQMTVNQARNAVRTAVSHSQDRPTAAVTPIQSHNPVAYLPSTAVVLQASPVLNSSSGCSSARVGVALGCAAASLTPPNVSAASLDTDAMRPVPMVALPVNAGSTKPLGAASNHGVACRLDKDCKREKKGLLKLLSNKKKLRPSPPSSPTLEAEQSVSMELPQGAVGPEMALSGSAGHNGRIGACPMDSELSMSSSSSNTDAVTHRSSPQDNTAPIAPPPRQPCSSLLSMQHDGRPIVCERYRVVVSYPPQSEAELELKEGDIVFVHKKREDGWFKGTLQRNGRTGLFPGSFVDSI</sequence>
<proteinExistence type="evidence at transcript level"/>
<evidence type="ECO:0000250" key="1">
    <source>
        <dbReference type="UniProtKB" id="Q69ZI1"/>
    </source>
</evidence>
<evidence type="ECO:0000250" key="2">
    <source>
        <dbReference type="UniProtKB" id="Q71F54"/>
    </source>
</evidence>
<evidence type="ECO:0000250" key="3">
    <source>
        <dbReference type="UniProtKB" id="Q7Z6J0"/>
    </source>
</evidence>
<evidence type="ECO:0000255" key="4">
    <source>
        <dbReference type="PROSITE-ProRule" id="PRU00175"/>
    </source>
</evidence>
<evidence type="ECO:0000255" key="5">
    <source>
        <dbReference type="PROSITE-ProRule" id="PRU00192"/>
    </source>
</evidence>
<evidence type="ECO:0000256" key="6">
    <source>
        <dbReference type="SAM" id="MobiDB-lite"/>
    </source>
</evidence>
<evidence type="ECO:0000305" key="7"/>
<dbReference type="EC" id="2.3.2.27" evidence="3"/>
<dbReference type="EMBL" id="BC141794">
    <property type="protein sequence ID" value="AAI41795.1"/>
    <property type="status" value="ALT_INIT"/>
    <property type="molecule type" value="mRNA"/>
</dbReference>
<dbReference type="RefSeq" id="NP_001038952.2">
    <property type="nucleotide sequence ID" value="NM_001045487.2"/>
</dbReference>
<dbReference type="SMR" id="A5D8S5"/>
<dbReference type="FunCoup" id="A5D8S5">
    <property type="interactions" value="783"/>
</dbReference>
<dbReference type="STRING" id="7955.ENSDARP00000050558"/>
<dbReference type="PaxDb" id="7955-ENSDARP00000050558"/>
<dbReference type="PeptideAtlas" id="A5D8S5"/>
<dbReference type="GeneID" id="556523"/>
<dbReference type="KEGG" id="dre:556523"/>
<dbReference type="AGR" id="ZFIN:ZDB-GENE-030131-6288"/>
<dbReference type="CTD" id="57630"/>
<dbReference type="ZFIN" id="ZDB-GENE-030131-6288">
    <property type="gene designation" value="sh3rf1"/>
</dbReference>
<dbReference type="eggNOG" id="KOG2177">
    <property type="taxonomic scope" value="Eukaryota"/>
</dbReference>
<dbReference type="InParanoid" id="A5D8S5"/>
<dbReference type="OrthoDB" id="19092at2759"/>
<dbReference type="Reactome" id="R-DRE-9013424">
    <property type="pathway name" value="RHOV GTPase cycle"/>
</dbReference>
<dbReference type="Reactome" id="R-DRE-983168">
    <property type="pathway name" value="Antigen processing: Ubiquitination &amp; Proteasome degradation"/>
</dbReference>
<dbReference type="UniPathway" id="UPA00143"/>
<dbReference type="PRO" id="PR:A5D8S5"/>
<dbReference type="Proteomes" id="UP000000437">
    <property type="component" value="Chromosome 20"/>
</dbReference>
<dbReference type="GO" id="GO:0005794">
    <property type="term" value="C:Golgi apparatus"/>
    <property type="evidence" value="ECO:0007669"/>
    <property type="project" value="UniProtKB-SubCell"/>
</dbReference>
<dbReference type="GO" id="GO:0030027">
    <property type="term" value="C:lamellipodium"/>
    <property type="evidence" value="ECO:0000250"/>
    <property type="project" value="UniProtKB"/>
</dbReference>
<dbReference type="GO" id="GO:0048471">
    <property type="term" value="C:perinuclear region of cytoplasm"/>
    <property type="evidence" value="ECO:0007669"/>
    <property type="project" value="UniProtKB-SubCell"/>
</dbReference>
<dbReference type="GO" id="GO:0005078">
    <property type="term" value="F:MAP-kinase scaffold activity"/>
    <property type="evidence" value="ECO:0000250"/>
    <property type="project" value="UniProtKB"/>
</dbReference>
<dbReference type="GO" id="GO:0061630">
    <property type="term" value="F:ubiquitin protein ligase activity"/>
    <property type="evidence" value="ECO:0000250"/>
    <property type="project" value="UniProtKB"/>
</dbReference>
<dbReference type="GO" id="GO:0008270">
    <property type="term" value="F:zinc ion binding"/>
    <property type="evidence" value="ECO:0007669"/>
    <property type="project" value="UniProtKB-KW"/>
</dbReference>
<dbReference type="GO" id="GO:0043066">
    <property type="term" value="P:negative regulation of apoptotic process"/>
    <property type="evidence" value="ECO:0000318"/>
    <property type="project" value="GO_Central"/>
</dbReference>
<dbReference type="GO" id="GO:0001764">
    <property type="term" value="P:neuron migration"/>
    <property type="evidence" value="ECO:0000250"/>
    <property type="project" value="UniProtKB"/>
</dbReference>
<dbReference type="GO" id="GO:0046330">
    <property type="term" value="P:positive regulation of JNK cascade"/>
    <property type="evidence" value="ECO:0000250"/>
    <property type="project" value="UniProtKB"/>
</dbReference>
<dbReference type="GO" id="GO:0032436">
    <property type="term" value="P:positive regulation of proteasomal ubiquitin-dependent protein catabolic process"/>
    <property type="evidence" value="ECO:0000318"/>
    <property type="project" value="GO_Central"/>
</dbReference>
<dbReference type="GO" id="GO:0051865">
    <property type="term" value="P:protein autoubiquitination"/>
    <property type="evidence" value="ECO:0000250"/>
    <property type="project" value="UniProtKB"/>
</dbReference>
<dbReference type="GO" id="GO:0016567">
    <property type="term" value="P:protein ubiquitination"/>
    <property type="evidence" value="ECO:0000318"/>
    <property type="project" value="GO_Central"/>
</dbReference>
<dbReference type="GO" id="GO:0043370">
    <property type="term" value="P:regulation of CD4-positive, alpha-beta T cell differentiation"/>
    <property type="evidence" value="ECO:0000250"/>
    <property type="project" value="UniProtKB"/>
</dbReference>
<dbReference type="GO" id="GO:2000564">
    <property type="term" value="P:regulation of CD8-positive, alpha-beta T cell proliferation"/>
    <property type="evidence" value="ECO:0000250"/>
    <property type="project" value="UniProtKB"/>
</dbReference>
<dbReference type="CDD" id="cd16748">
    <property type="entry name" value="RING-HC_SH3RF1"/>
    <property type="match status" value="1"/>
</dbReference>
<dbReference type="CDD" id="cd11927">
    <property type="entry name" value="SH3_SH3RF1_1"/>
    <property type="match status" value="1"/>
</dbReference>
<dbReference type="CDD" id="cd11930">
    <property type="entry name" value="SH3_SH3RF1_2"/>
    <property type="match status" value="1"/>
</dbReference>
<dbReference type="CDD" id="cd11926">
    <property type="entry name" value="SH3_SH3RF1_3"/>
    <property type="match status" value="1"/>
</dbReference>
<dbReference type="CDD" id="cd11785">
    <property type="entry name" value="SH3_SH3RF_C"/>
    <property type="match status" value="1"/>
</dbReference>
<dbReference type="FunFam" id="3.30.40.10:FF:000077">
    <property type="entry name" value="E3 ubiquitin-protein ligase SH3RF1 isoform X1"/>
    <property type="match status" value="1"/>
</dbReference>
<dbReference type="FunFam" id="2.30.30.40:FF:000063">
    <property type="entry name" value="Putative E3 ubiquitin-protein ligase SH3RF1"/>
    <property type="match status" value="1"/>
</dbReference>
<dbReference type="FunFam" id="2.30.30.40:FF:000091">
    <property type="entry name" value="Putative E3 ubiquitin-protein ligase SH3RF1"/>
    <property type="match status" value="1"/>
</dbReference>
<dbReference type="FunFam" id="2.30.30.40:FF:000118">
    <property type="entry name" value="Putative E3 ubiquitin-protein ligase SH3RF1"/>
    <property type="match status" value="1"/>
</dbReference>
<dbReference type="FunFam" id="2.30.30.40:FF:000001">
    <property type="entry name" value="Sorbin and SH3 domain-containing protein 1 isoform 2"/>
    <property type="match status" value="1"/>
</dbReference>
<dbReference type="Gene3D" id="2.30.30.40">
    <property type="entry name" value="SH3 Domains"/>
    <property type="match status" value="4"/>
</dbReference>
<dbReference type="Gene3D" id="3.30.40.10">
    <property type="entry name" value="Zinc/RING finger domain, C3HC4 (zinc finger)"/>
    <property type="match status" value="1"/>
</dbReference>
<dbReference type="InterPro" id="IPR050384">
    <property type="entry name" value="Endophilin_SH3RF"/>
</dbReference>
<dbReference type="InterPro" id="IPR036028">
    <property type="entry name" value="SH3-like_dom_sf"/>
</dbReference>
<dbReference type="InterPro" id="IPR001452">
    <property type="entry name" value="SH3_domain"/>
</dbReference>
<dbReference type="InterPro" id="IPR035816">
    <property type="entry name" value="SH3RF1/SH3RF3_SH3_4"/>
</dbReference>
<dbReference type="InterPro" id="IPR035795">
    <property type="entry name" value="SH3RF1_SH3_2"/>
</dbReference>
<dbReference type="InterPro" id="IPR027370">
    <property type="entry name" value="Znf-RING_euk"/>
</dbReference>
<dbReference type="InterPro" id="IPR001841">
    <property type="entry name" value="Znf_RING"/>
</dbReference>
<dbReference type="InterPro" id="IPR013083">
    <property type="entry name" value="Znf_RING/FYVE/PHD"/>
</dbReference>
<dbReference type="InterPro" id="IPR017907">
    <property type="entry name" value="Znf_RING_CS"/>
</dbReference>
<dbReference type="PANTHER" id="PTHR14167:SF116">
    <property type="entry name" value="CAP, ISOFORM AC"/>
    <property type="match status" value="1"/>
</dbReference>
<dbReference type="PANTHER" id="PTHR14167">
    <property type="entry name" value="SH3 DOMAIN-CONTAINING"/>
    <property type="match status" value="1"/>
</dbReference>
<dbReference type="Pfam" id="PF00018">
    <property type="entry name" value="SH3_1"/>
    <property type="match status" value="2"/>
</dbReference>
<dbReference type="Pfam" id="PF14604">
    <property type="entry name" value="SH3_9"/>
    <property type="match status" value="2"/>
</dbReference>
<dbReference type="Pfam" id="PF13445">
    <property type="entry name" value="zf-RING_UBOX"/>
    <property type="match status" value="1"/>
</dbReference>
<dbReference type="PRINTS" id="PR00499">
    <property type="entry name" value="P67PHOX"/>
</dbReference>
<dbReference type="PRINTS" id="PR00452">
    <property type="entry name" value="SH3DOMAIN"/>
</dbReference>
<dbReference type="SMART" id="SM00184">
    <property type="entry name" value="RING"/>
    <property type="match status" value="1"/>
</dbReference>
<dbReference type="SMART" id="SM00326">
    <property type="entry name" value="SH3"/>
    <property type="match status" value="4"/>
</dbReference>
<dbReference type="SUPFAM" id="SSF57850">
    <property type="entry name" value="RING/U-box"/>
    <property type="match status" value="1"/>
</dbReference>
<dbReference type="SUPFAM" id="SSF50044">
    <property type="entry name" value="SH3-domain"/>
    <property type="match status" value="4"/>
</dbReference>
<dbReference type="PROSITE" id="PS50002">
    <property type="entry name" value="SH3"/>
    <property type="match status" value="4"/>
</dbReference>
<dbReference type="PROSITE" id="PS00518">
    <property type="entry name" value="ZF_RING_1"/>
    <property type="match status" value="1"/>
</dbReference>
<dbReference type="PROSITE" id="PS50089">
    <property type="entry name" value="ZF_RING_2"/>
    <property type="match status" value="1"/>
</dbReference>
<gene>
    <name type="primary">sh3rf1</name>
    <name type="synonym">posh</name>
    <name type="ORF">si:dkey-15j16.4</name>
</gene>
<accession>A5D8S5</accession>
<protein>
    <recommendedName>
        <fullName>E3 ubiquitin-protein ligase SH3RF1</fullName>
        <ecNumber evidence="3">2.3.2.27</ecNumber>
    </recommendedName>
    <alternativeName>
        <fullName>Plenty of SH3s</fullName>
        <shortName>Protein POSH</shortName>
    </alternativeName>
    <alternativeName>
        <fullName evidence="7">RING-type E3 ubiquitin transferase SH3RF1</fullName>
    </alternativeName>
    <alternativeName>
        <fullName>SH3 domain-containing RING finger protein 1</fullName>
    </alternativeName>
</protein>
<comment type="function">
    <text evidence="1 3">Has E3 ubiquitin-protein ligase activity. In the absence of an external substrate, it can catalyze self-ubiquitination. Acts as a scaffold protein that contributes to the effective activation of the JNK signaling pathway.</text>
</comment>
<comment type="catalytic activity">
    <reaction evidence="3">
        <text>S-ubiquitinyl-[E2 ubiquitin-conjugating enzyme]-L-cysteine + [acceptor protein]-L-lysine = [E2 ubiquitin-conjugating enzyme]-L-cysteine + N(6)-ubiquitinyl-[acceptor protein]-L-lysine.</text>
        <dbReference type="EC" id="2.3.2.27"/>
    </reaction>
</comment>
<comment type="pathway">
    <text>Protein modification; protein ubiquitination.</text>
</comment>
<comment type="subcellular location">
    <subcellularLocation>
        <location evidence="2">Cytoplasm</location>
        <location evidence="2">Perinuclear region</location>
    </subcellularLocation>
    <subcellularLocation>
        <location evidence="1">Cell projection</location>
        <location evidence="1">Lamellipodium</location>
    </subcellularLocation>
    <subcellularLocation>
        <location evidence="1">Golgi apparatus</location>
        <location evidence="1">trans-Golgi network</location>
    </subcellularLocation>
</comment>
<comment type="domain">
    <text evidence="3">The RING finger domain is required for ubiquitin ligase activity and autoubiquitination.</text>
</comment>
<comment type="PTM">
    <text evidence="2">Autoubiquitinated. Ubiquitinated by SH3RF2, leading to proteasome-mediated degradation.</text>
</comment>
<comment type="similarity">
    <text evidence="7">Belongs to the SH3RF family.</text>
</comment>
<comment type="sequence caution" evidence="7">
    <conflict type="erroneous initiation">
        <sequence resource="EMBL-CDS" id="AAI41795"/>
    </conflict>
</comment>